<reference key="1">
    <citation type="journal article" date="2007" name="Proc. Natl. Acad. Sci. U.S.A.">
        <title>The Orientia tsutsugamushi genome reveals massive proliferation of conjugative type IV secretion system and host-cell interaction genes.</title>
        <authorList>
            <person name="Cho N.-H."/>
            <person name="Kim H.-R."/>
            <person name="Lee J.-H."/>
            <person name="Kim S.-Y."/>
            <person name="Kim J."/>
            <person name="Cha S."/>
            <person name="Kim S.-Y."/>
            <person name="Darby A.C."/>
            <person name="Fuxelius H.-H."/>
            <person name="Yin J."/>
            <person name="Kim J.H."/>
            <person name="Kim J."/>
            <person name="Lee S.J."/>
            <person name="Koh Y.-S."/>
            <person name="Jang W.-J."/>
            <person name="Park K.-H."/>
            <person name="Andersson S.G.E."/>
            <person name="Choi M.-S."/>
            <person name="Kim I.-S."/>
        </authorList>
    </citation>
    <scope>NUCLEOTIDE SEQUENCE [LARGE SCALE GENOMIC DNA]</scope>
    <source>
        <strain>Boryong</strain>
    </source>
</reference>
<keyword id="KW-1185">Reference proteome</keyword>
<keyword id="KW-0687">Ribonucleoprotein</keyword>
<keyword id="KW-0689">Ribosomal protein</keyword>
<keyword id="KW-0694">RNA-binding</keyword>
<keyword id="KW-0699">rRNA-binding</keyword>
<keyword id="KW-0820">tRNA-binding</keyword>
<name>RL16_ORITB</name>
<feature type="chain" id="PRO_1000054667" description="Large ribosomal subunit protein uL16">
    <location>
        <begin position="1"/>
        <end position="136"/>
    </location>
</feature>
<evidence type="ECO:0000255" key="1">
    <source>
        <dbReference type="HAMAP-Rule" id="MF_01342"/>
    </source>
</evidence>
<evidence type="ECO:0000305" key="2"/>
<gene>
    <name evidence="1" type="primary">rplP</name>
    <name type="ordered locus">OTBS_0369</name>
</gene>
<accession>A5CCK5</accession>
<organism>
    <name type="scientific">Orientia tsutsugamushi (strain Boryong)</name>
    <name type="common">Rickettsia tsutsugamushi</name>
    <dbReference type="NCBI Taxonomy" id="357244"/>
    <lineage>
        <taxon>Bacteria</taxon>
        <taxon>Pseudomonadati</taxon>
        <taxon>Pseudomonadota</taxon>
        <taxon>Alphaproteobacteria</taxon>
        <taxon>Rickettsiales</taxon>
        <taxon>Rickettsiaceae</taxon>
        <taxon>Rickettsieae</taxon>
        <taxon>Orientia</taxon>
    </lineage>
</organism>
<dbReference type="EMBL" id="AM494475">
    <property type="protein sequence ID" value="CAM79435.1"/>
    <property type="molecule type" value="Genomic_DNA"/>
</dbReference>
<dbReference type="RefSeq" id="WP_011944433.1">
    <property type="nucleotide sequence ID" value="NC_009488.1"/>
</dbReference>
<dbReference type="SMR" id="A5CCK5"/>
<dbReference type="KEGG" id="ots:OTBS_0369"/>
<dbReference type="eggNOG" id="COG0197">
    <property type="taxonomic scope" value="Bacteria"/>
</dbReference>
<dbReference type="HOGENOM" id="CLU_078858_2_1_5"/>
<dbReference type="Proteomes" id="UP000001565">
    <property type="component" value="Chromosome"/>
</dbReference>
<dbReference type="GO" id="GO:0022625">
    <property type="term" value="C:cytosolic large ribosomal subunit"/>
    <property type="evidence" value="ECO:0007669"/>
    <property type="project" value="TreeGrafter"/>
</dbReference>
<dbReference type="GO" id="GO:0019843">
    <property type="term" value="F:rRNA binding"/>
    <property type="evidence" value="ECO:0007669"/>
    <property type="project" value="UniProtKB-UniRule"/>
</dbReference>
<dbReference type="GO" id="GO:0003735">
    <property type="term" value="F:structural constituent of ribosome"/>
    <property type="evidence" value="ECO:0007669"/>
    <property type="project" value="InterPro"/>
</dbReference>
<dbReference type="GO" id="GO:0000049">
    <property type="term" value="F:tRNA binding"/>
    <property type="evidence" value="ECO:0007669"/>
    <property type="project" value="UniProtKB-KW"/>
</dbReference>
<dbReference type="GO" id="GO:0006412">
    <property type="term" value="P:translation"/>
    <property type="evidence" value="ECO:0007669"/>
    <property type="project" value="UniProtKB-UniRule"/>
</dbReference>
<dbReference type="CDD" id="cd01433">
    <property type="entry name" value="Ribosomal_L16_L10e"/>
    <property type="match status" value="1"/>
</dbReference>
<dbReference type="FunFam" id="3.90.1170.10:FF:000001">
    <property type="entry name" value="50S ribosomal protein L16"/>
    <property type="match status" value="1"/>
</dbReference>
<dbReference type="Gene3D" id="3.90.1170.10">
    <property type="entry name" value="Ribosomal protein L10e/L16"/>
    <property type="match status" value="1"/>
</dbReference>
<dbReference type="HAMAP" id="MF_01342">
    <property type="entry name" value="Ribosomal_uL16"/>
    <property type="match status" value="1"/>
</dbReference>
<dbReference type="InterPro" id="IPR047873">
    <property type="entry name" value="Ribosomal_uL16"/>
</dbReference>
<dbReference type="InterPro" id="IPR000114">
    <property type="entry name" value="Ribosomal_uL16_bact-type"/>
</dbReference>
<dbReference type="InterPro" id="IPR020798">
    <property type="entry name" value="Ribosomal_uL16_CS"/>
</dbReference>
<dbReference type="InterPro" id="IPR016180">
    <property type="entry name" value="Ribosomal_uL16_dom"/>
</dbReference>
<dbReference type="InterPro" id="IPR036920">
    <property type="entry name" value="Ribosomal_uL16_sf"/>
</dbReference>
<dbReference type="NCBIfam" id="TIGR01164">
    <property type="entry name" value="rplP_bact"/>
    <property type="match status" value="1"/>
</dbReference>
<dbReference type="PANTHER" id="PTHR12220">
    <property type="entry name" value="50S/60S RIBOSOMAL PROTEIN L16"/>
    <property type="match status" value="1"/>
</dbReference>
<dbReference type="PANTHER" id="PTHR12220:SF13">
    <property type="entry name" value="LARGE RIBOSOMAL SUBUNIT PROTEIN UL16M"/>
    <property type="match status" value="1"/>
</dbReference>
<dbReference type="Pfam" id="PF00252">
    <property type="entry name" value="Ribosomal_L16"/>
    <property type="match status" value="1"/>
</dbReference>
<dbReference type="PRINTS" id="PR00060">
    <property type="entry name" value="RIBOSOMALL16"/>
</dbReference>
<dbReference type="SUPFAM" id="SSF54686">
    <property type="entry name" value="Ribosomal protein L16p/L10e"/>
    <property type="match status" value="1"/>
</dbReference>
<dbReference type="PROSITE" id="PS00701">
    <property type="entry name" value="RIBOSOMAL_L16_2"/>
    <property type="match status" value="1"/>
</dbReference>
<comment type="function">
    <text evidence="1">Binds 23S rRNA and is also seen to make contacts with the A and possibly P site tRNAs.</text>
</comment>
<comment type="subunit">
    <text evidence="1">Part of the 50S ribosomal subunit.</text>
</comment>
<comment type="similarity">
    <text evidence="1">Belongs to the universal ribosomal protein uL16 family.</text>
</comment>
<protein>
    <recommendedName>
        <fullName evidence="1">Large ribosomal subunit protein uL16</fullName>
    </recommendedName>
    <alternativeName>
        <fullName evidence="2">50S ribosomal protein L16</fullName>
    </alternativeName>
</protein>
<proteinExistence type="inferred from homology"/>
<sequence>MLSPKKQKYRKAQKGRVASKAKAGTMIAFGEFGLKSLDSCRITSRQIEAARRAAVRCMKRQGKFWINIFPSIPVSKKPTEVRMGKGKGATEFFAARVAVGRILFELDGVSESIAIKALELAGAKLPVRTKIVKRYE</sequence>